<comment type="function">
    <text evidence="1">Plasma membrane osmosensor that activates the high osmolarity glycerol (HOG) MAPK signaling pathway in response to high osmolarity.</text>
</comment>
<comment type="subunit">
    <text evidence="1">Forms homooligomers.</text>
</comment>
<comment type="subcellular location">
    <subcellularLocation>
        <location evidence="1">Cell membrane</location>
        <topology evidence="1">Multi-pass membrane protein</topology>
    </subcellularLocation>
</comment>
<comment type="similarity">
    <text evidence="4">Belongs to the SHO1 family.</text>
</comment>
<accession>Q6BVC2</accession>
<organism>
    <name type="scientific">Debaryomyces hansenii (strain ATCC 36239 / CBS 767 / BCRC 21394 / JCM 1990 / NBRC 0083 / IGC 2968)</name>
    <name type="common">Yeast</name>
    <name type="synonym">Torulaspora hansenii</name>
    <dbReference type="NCBI Taxonomy" id="284592"/>
    <lineage>
        <taxon>Eukaryota</taxon>
        <taxon>Fungi</taxon>
        <taxon>Dikarya</taxon>
        <taxon>Ascomycota</taxon>
        <taxon>Saccharomycotina</taxon>
        <taxon>Pichiomycetes</taxon>
        <taxon>Debaryomycetaceae</taxon>
        <taxon>Debaryomyces</taxon>
    </lineage>
</organism>
<reference key="1">
    <citation type="journal article" date="2004" name="Nature">
        <title>Genome evolution in yeasts.</title>
        <authorList>
            <person name="Dujon B."/>
            <person name="Sherman D."/>
            <person name="Fischer G."/>
            <person name="Durrens P."/>
            <person name="Casaregola S."/>
            <person name="Lafontaine I."/>
            <person name="de Montigny J."/>
            <person name="Marck C."/>
            <person name="Neuveglise C."/>
            <person name="Talla E."/>
            <person name="Goffard N."/>
            <person name="Frangeul L."/>
            <person name="Aigle M."/>
            <person name="Anthouard V."/>
            <person name="Babour A."/>
            <person name="Barbe V."/>
            <person name="Barnay S."/>
            <person name="Blanchin S."/>
            <person name="Beckerich J.-M."/>
            <person name="Beyne E."/>
            <person name="Bleykasten C."/>
            <person name="Boisrame A."/>
            <person name="Boyer J."/>
            <person name="Cattolico L."/>
            <person name="Confanioleri F."/>
            <person name="de Daruvar A."/>
            <person name="Despons L."/>
            <person name="Fabre E."/>
            <person name="Fairhead C."/>
            <person name="Ferry-Dumazet H."/>
            <person name="Groppi A."/>
            <person name="Hantraye F."/>
            <person name="Hennequin C."/>
            <person name="Jauniaux N."/>
            <person name="Joyet P."/>
            <person name="Kachouri R."/>
            <person name="Kerrest A."/>
            <person name="Koszul R."/>
            <person name="Lemaire M."/>
            <person name="Lesur I."/>
            <person name="Ma L."/>
            <person name="Muller H."/>
            <person name="Nicaud J.-M."/>
            <person name="Nikolski M."/>
            <person name="Oztas S."/>
            <person name="Ozier-Kalogeropoulos O."/>
            <person name="Pellenz S."/>
            <person name="Potier S."/>
            <person name="Richard G.-F."/>
            <person name="Straub M.-L."/>
            <person name="Suleau A."/>
            <person name="Swennen D."/>
            <person name="Tekaia F."/>
            <person name="Wesolowski-Louvel M."/>
            <person name="Westhof E."/>
            <person name="Wirth B."/>
            <person name="Zeniou-Meyer M."/>
            <person name="Zivanovic Y."/>
            <person name="Bolotin-Fukuhara M."/>
            <person name="Thierry A."/>
            <person name="Bouchier C."/>
            <person name="Caudron B."/>
            <person name="Scarpelli C."/>
            <person name="Gaillardin C."/>
            <person name="Weissenbach J."/>
            <person name="Wincker P."/>
            <person name="Souciet J.-L."/>
        </authorList>
    </citation>
    <scope>NUCLEOTIDE SEQUENCE [LARGE SCALE GENOMIC DNA]</scope>
    <source>
        <strain>ATCC 36239 / CBS 767 / BCRC 21394 / JCM 1990 / NBRC 0083 / IGC 2968</strain>
    </source>
</reference>
<gene>
    <name type="primary">SHO1</name>
    <name type="ordered locus">DEHA2C03806g</name>
</gene>
<name>SHO1_DEBHA</name>
<proteinExistence type="inferred from homology"/>
<dbReference type="EMBL" id="CR382135">
    <property type="protein sequence ID" value="CAG85892.1"/>
    <property type="molecule type" value="Genomic_DNA"/>
</dbReference>
<dbReference type="RefSeq" id="XP_457847.1">
    <property type="nucleotide sequence ID" value="XM_457847.1"/>
</dbReference>
<dbReference type="SMR" id="Q6BVC2"/>
<dbReference type="FunCoup" id="Q6BVC2">
    <property type="interactions" value="176"/>
</dbReference>
<dbReference type="STRING" id="284592.Q6BVC2"/>
<dbReference type="GlyCosmos" id="Q6BVC2">
    <property type="glycosylation" value="1 site, No reported glycans"/>
</dbReference>
<dbReference type="GeneID" id="2900485"/>
<dbReference type="KEGG" id="dha:DEHA2C03806g"/>
<dbReference type="VEuPathDB" id="FungiDB:DEHA2C03806g"/>
<dbReference type="eggNOG" id="ENOG502QW7A">
    <property type="taxonomic scope" value="Eukaryota"/>
</dbReference>
<dbReference type="HOGENOM" id="CLU_043316_0_0_1"/>
<dbReference type="InParanoid" id="Q6BVC2"/>
<dbReference type="OMA" id="NIVWIFY"/>
<dbReference type="OrthoDB" id="5983572at2759"/>
<dbReference type="Proteomes" id="UP000000599">
    <property type="component" value="Chromosome C"/>
</dbReference>
<dbReference type="GO" id="GO:0005886">
    <property type="term" value="C:plasma membrane"/>
    <property type="evidence" value="ECO:0007669"/>
    <property type="project" value="UniProtKB-SubCell"/>
</dbReference>
<dbReference type="GO" id="GO:0030833">
    <property type="term" value="P:regulation of actin filament polymerization"/>
    <property type="evidence" value="ECO:0007669"/>
    <property type="project" value="TreeGrafter"/>
</dbReference>
<dbReference type="CDD" id="cd11855">
    <property type="entry name" value="SH3_Sho1p"/>
    <property type="match status" value="1"/>
</dbReference>
<dbReference type="FunFam" id="2.30.30.40:FF:000213">
    <property type="entry name" value="High osmolarity signaling protein SHO1"/>
    <property type="match status" value="1"/>
</dbReference>
<dbReference type="Gene3D" id="2.30.30.40">
    <property type="entry name" value="SH3 Domains"/>
    <property type="match status" value="1"/>
</dbReference>
<dbReference type="InterPro" id="IPR036028">
    <property type="entry name" value="SH3-like_dom_sf"/>
</dbReference>
<dbReference type="InterPro" id="IPR001452">
    <property type="entry name" value="SH3_domain"/>
</dbReference>
<dbReference type="InterPro" id="IPR035522">
    <property type="entry name" value="Sho1_SH3"/>
</dbReference>
<dbReference type="PANTHER" id="PTHR15735">
    <property type="entry name" value="FCH AND DOUBLE SH3 DOMAINS PROTEIN"/>
    <property type="match status" value="1"/>
</dbReference>
<dbReference type="PANTHER" id="PTHR15735:SF20">
    <property type="entry name" value="HIGH OSMOLARITY SIGNALING PROTEIN SHO1"/>
    <property type="match status" value="1"/>
</dbReference>
<dbReference type="Pfam" id="PF14604">
    <property type="entry name" value="SH3_9"/>
    <property type="match status" value="1"/>
</dbReference>
<dbReference type="PRINTS" id="PR00452">
    <property type="entry name" value="SH3DOMAIN"/>
</dbReference>
<dbReference type="SMART" id="SM00326">
    <property type="entry name" value="SH3"/>
    <property type="match status" value="1"/>
</dbReference>
<dbReference type="SUPFAM" id="SSF50044">
    <property type="entry name" value="SH3-domain"/>
    <property type="match status" value="1"/>
</dbReference>
<dbReference type="PROSITE" id="PS50002">
    <property type="entry name" value="SH3"/>
    <property type="match status" value="1"/>
</dbReference>
<keyword id="KW-1003">Cell membrane</keyword>
<keyword id="KW-0325">Glycoprotein</keyword>
<keyword id="KW-0472">Membrane</keyword>
<keyword id="KW-1185">Reference proteome</keyword>
<keyword id="KW-0728">SH3 domain</keyword>
<keyword id="KW-0346">Stress response</keyword>
<keyword id="KW-0812">Transmembrane</keyword>
<keyword id="KW-1133">Transmembrane helix</keyword>
<evidence type="ECO:0000250" key="1"/>
<evidence type="ECO:0000255" key="2"/>
<evidence type="ECO:0000255" key="3">
    <source>
        <dbReference type="PROSITE-ProRule" id="PRU00192"/>
    </source>
</evidence>
<evidence type="ECO:0000305" key="4"/>
<sequence>MSFSISNFIGDPFAISTLSFGLIAWIISIAGAGASNQDKFPHFSWWGIMYQLVIMVVITVLYLYNTIELYKFTLVGLLSIAFVYSTNSTNHLIYKTGDSGMLCCAAGCILLSMLNLIWILYFGGHPESPTNQFIDSFSLKTHSHNHGHLPSADNKAADGDIDDEVEYKRYSSSQGNTQFQDNNLRQSQLTTNNKSVNTPYMSSSQLNGLENFSSSDVHQSRDLTSNKRQTVYNDTNSVNDTGNVFRYKAKALYSYDANPEDINEISFAKDELLEVDDIDGKWWQAKRSNGQVGICPSNYVKLMD</sequence>
<feature type="chain" id="PRO_0000410374" description="High osmolarity signaling protein SHO1">
    <location>
        <begin position="1"/>
        <end position="304"/>
    </location>
</feature>
<feature type="topological domain" description="Cytoplasmic" evidence="2">
    <location>
        <begin position="1"/>
        <end position="12"/>
    </location>
</feature>
<feature type="transmembrane region" description="Helical" evidence="2">
    <location>
        <begin position="13"/>
        <end position="33"/>
    </location>
</feature>
<feature type="topological domain" description="Extracellular" evidence="2">
    <location>
        <begin position="34"/>
        <end position="42"/>
    </location>
</feature>
<feature type="transmembrane region" description="Helical" evidence="2">
    <location>
        <begin position="43"/>
        <end position="63"/>
    </location>
</feature>
<feature type="topological domain" description="Cytoplasmic" evidence="2">
    <location>
        <begin position="64"/>
        <end position="65"/>
    </location>
</feature>
<feature type="transmembrane region" description="Helical" evidence="2">
    <location>
        <begin position="66"/>
        <end position="86"/>
    </location>
</feature>
<feature type="topological domain" description="Extracellular" evidence="2">
    <location>
        <begin position="87"/>
        <end position="101"/>
    </location>
</feature>
<feature type="transmembrane region" description="Helical" evidence="2">
    <location>
        <begin position="102"/>
        <end position="122"/>
    </location>
</feature>
<feature type="topological domain" description="Cytoplasmic" evidence="2">
    <location>
        <begin position="123"/>
        <end position="304"/>
    </location>
</feature>
<feature type="domain" description="SH3" evidence="3">
    <location>
        <begin position="244"/>
        <end position="304"/>
    </location>
</feature>
<feature type="glycosylation site" description="N-linked (GlcNAc...) asparagine" evidence="2">
    <location>
        <position position="87"/>
    </location>
</feature>
<protein>
    <recommendedName>
        <fullName>High osmolarity signaling protein SHO1</fullName>
    </recommendedName>
    <alternativeName>
        <fullName>Osmosensor SHO1</fullName>
    </alternativeName>
</protein>